<keyword id="KW-0028">Amino-acid biosynthesis</keyword>
<keyword id="KW-0057">Aromatic amino acid biosynthesis</keyword>
<keyword id="KW-0170">Cobalt</keyword>
<keyword id="KW-0963">Cytoplasm</keyword>
<keyword id="KW-0456">Lyase</keyword>
<keyword id="KW-0479">Metal-binding</keyword>
<keyword id="KW-0520">NAD</keyword>
<keyword id="KW-0547">Nucleotide-binding</keyword>
<keyword id="KW-0862">Zinc</keyword>
<proteinExistence type="inferred from homology"/>
<evidence type="ECO:0000255" key="1">
    <source>
        <dbReference type="HAMAP-Rule" id="MF_00110"/>
    </source>
</evidence>
<feature type="chain" id="PRO_1000202914" description="3-dehydroquinate synthase">
    <location>
        <begin position="1"/>
        <end position="365"/>
    </location>
</feature>
<feature type="binding site" evidence="1">
    <location>
        <begin position="106"/>
        <end position="110"/>
    </location>
    <ligand>
        <name>NAD(+)</name>
        <dbReference type="ChEBI" id="CHEBI:57540"/>
    </ligand>
</feature>
<feature type="binding site" evidence="1">
    <location>
        <begin position="130"/>
        <end position="131"/>
    </location>
    <ligand>
        <name>NAD(+)</name>
        <dbReference type="ChEBI" id="CHEBI:57540"/>
    </ligand>
</feature>
<feature type="binding site" evidence="1">
    <location>
        <position position="142"/>
    </location>
    <ligand>
        <name>NAD(+)</name>
        <dbReference type="ChEBI" id="CHEBI:57540"/>
    </ligand>
</feature>
<feature type="binding site" evidence="1">
    <location>
        <position position="151"/>
    </location>
    <ligand>
        <name>NAD(+)</name>
        <dbReference type="ChEBI" id="CHEBI:57540"/>
    </ligand>
</feature>
<feature type="binding site" evidence="1">
    <location>
        <begin position="169"/>
        <end position="172"/>
    </location>
    <ligand>
        <name>NAD(+)</name>
        <dbReference type="ChEBI" id="CHEBI:57540"/>
    </ligand>
</feature>
<feature type="binding site" evidence="1">
    <location>
        <position position="184"/>
    </location>
    <ligand>
        <name>Zn(2+)</name>
        <dbReference type="ChEBI" id="CHEBI:29105"/>
    </ligand>
</feature>
<feature type="binding site" evidence="1">
    <location>
        <position position="247"/>
    </location>
    <ligand>
        <name>Zn(2+)</name>
        <dbReference type="ChEBI" id="CHEBI:29105"/>
    </ligand>
</feature>
<feature type="binding site" evidence="1">
    <location>
        <position position="264"/>
    </location>
    <ligand>
        <name>Zn(2+)</name>
        <dbReference type="ChEBI" id="CHEBI:29105"/>
    </ligand>
</feature>
<organism>
    <name type="scientific">Listeria monocytogenes serotype 4b (strain CLIP80459)</name>
    <dbReference type="NCBI Taxonomy" id="568819"/>
    <lineage>
        <taxon>Bacteria</taxon>
        <taxon>Bacillati</taxon>
        <taxon>Bacillota</taxon>
        <taxon>Bacilli</taxon>
        <taxon>Bacillales</taxon>
        <taxon>Listeriaceae</taxon>
        <taxon>Listeria</taxon>
    </lineage>
</organism>
<gene>
    <name evidence="1" type="primary">aroB</name>
    <name type="ordered locus">Lm4b_01944</name>
</gene>
<protein>
    <recommendedName>
        <fullName evidence="1">3-dehydroquinate synthase</fullName>
        <shortName evidence="1">DHQS</shortName>
        <ecNumber evidence="1">4.2.3.4</ecNumber>
    </recommendedName>
</protein>
<accession>C1KWM7</accession>
<sequence length="365" mass="41199">MPEITVRAKSKTYPVYINEFALEDVREKWTESLAKFSHVFVLTDEHVAELHKAKLDAVLADLPVVTYYVAPNGEEAKTFRVYEDVMTKLIETGLDRKAVLIAFGGGVIGDLGGFVAATYMRGIPFYQVPTTVLAHDSAVGGKVAINHPLGKNMIGNFYQPEAVIYDTQFFATLPEREMRSGFAEMIKHALISDQTLLRALMDTFTEPKDFYTKDLTPFLQRGIEIKANIVAQDETEQGVRAYLNFGHTFGHALEAYGNFGKWLHGEAITYGMIYALTMSETIYGLDFDLAEFKTWLKQLGYDTTFDATVPFNKILENMRHDKKTTFNEISMVLLEEIGKPVIFKAEDDLIFETYKRVMRNGGNGI</sequence>
<comment type="function">
    <text evidence="1">Catalyzes the conversion of 3-deoxy-D-arabino-heptulosonate 7-phosphate (DAHP) to dehydroquinate (DHQ).</text>
</comment>
<comment type="catalytic activity">
    <reaction evidence="1">
        <text>7-phospho-2-dehydro-3-deoxy-D-arabino-heptonate = 3-dehydroquinate + phosphate</text>
        <dbReference type="Rhea" id="RHEA:21968"/>
        <dbReference type="ChEBI" id="CHEBI:32364"/>
        <dbReference type="ChEBI" id="CHEBI:43474"/>
        <dbReference type="ChEBI" id="CHEBI:58394"/>
        <dbReference type="EC" id="4.2.3.4"/>
    </reaction>
</comment>
<comment type="cofactor">
    <cofactor evidence="1">
        <name>Co(2+)</name>
        <dbReference type="ChEBI" id="CHEBI:48828"/>
    </cofactor>
    <cofactor evidence="1">
        <name>Zn(2+)</name>
        <dbReference type="ChEBI" id="CHEBI:29105"/>
    </cofactor>
    <text evidence="1">Binds 1 divalent metal cation per subunit. Can use either Co(2+) or Zn(2+).</text>
</comment>
<comment type="cofactor">
    <cofactor evidence="1">
        <name>NAD(+)</name>
        <dbReference type="ChEBI" id="CHEBI:57540"/>
    </cofactor>
</comment>
<comment type="pathway">
    <text evidence="1">Metabolic intermediate biosynthesis; chorismate biosynthesis; chorismate from D-erythrose 4-phosphate and phosphoenolpyruvate: step 2/7.</text>
</comment>
<comment type="subcellular location">
    <subcellularLocation>
        <location evidence="1">Cytoplasm</location>
    </subcellularLocation>
</comment>
<comment type="similarity">
    <text evidence="1">Belongs to the sugar phosphate cyclases superfamily. Dehydroquinate synthase family.</text>
</comment>
<reference key="1">
    <citation type="journal article" date="2012" name="BMC Genomics">
        <title>Comparative genomics and transcriptomics of lineages I, II, and III strains of Listeria monocytogenes.</title>
        <authorList>
            <person name="Hain T."/>
            <person name="Ghai R."/>
            <person name="Billion A."/>
            <person name="Kuenne C.T."/>
            <person name="Steinweg C."/>
            <person name="Izar B."/>
            <person name="Mohamed W."/>
            <person name="Mraheil M."/>
            <person name="Domann E."/>
            <person name="Schaffrath S."/>
            <person name="Karst U."/>
            <person name="Goesmann A."/>
            <person name="Oehm S."/>
            <person name="Puhler A."/>
            <person name="Merkl R."/>
            <person name="Vorwerk S."/>
            <person name="Glaser P."/>
            <person name="Garrido P."/>
            <person name="Rusniok C."/>
            <person name="Buchrieser C."/>
            <person name="Goebel W."/>
            <person name="Chakraborty T."/>
        </authorList>
    </citation>
    <scope>NUCLEOTIDE SEQUENCE [LARGE SCALE GENOMIC DNA]</scope>
    <source>
        <strain>CLIP80459</strain>
    </source>
</reference>
<name>AROB_LISMC</name>
<dbReference type="EC" id="4.2.3.4" evidence="1"/>
<dbReference type="EMBL" id="FM242711">
    <property type="protein sequence ID" value="CAS05702.1"/>
    <property type="molecule type" value="Genomic_DNA"/>
</dbReference>
<dbReference type="RefSeq" id="WP_012681369.1">
    <property type="nucleotide sequence ID" value="NC_012488.1"/>
</dbReference>
<dbReference type="SMR" id="C1KWM7"/>
<dbReference type="KEGG" id="lmc:Lm4b_01944"/>
<dbReference type="HOGENOM" id="CLU_001201_0_1_9"/>
<dbReference type="UniPathway" id="UPA00053">
    <property type="reaction ID" value="UER00085"/>
</dbReference>
<dbReference type="GO" id="GO:0005737">
    <property type="term" value="C:cytoplasm"/>
    <property type="evidence" value="ECO:0007669"/>
    <property type="project" value="UniProtKB-SubCell"/>
</dbReference>
<dbReference type="GO" id="GO:0003856">
    <property type="term" value="F:3-dehydroquinate synthase activity"/>
    <property type="evidence" value="ECO:0007669"/>
    <property type="project" value="UniProtKB-UniRule"/>
</dbReference>
<dbReference type="GO" id="GO:0046872">
    <property type="term" value="F:metal ion binding"/>
    <property type="evidence" value="ECO:0007669"/>
    <property type="project" value="UniProtKB-KW"/>
</dbReference>
<dbReference type="GO" id="GO:0000166">
    <property type="term" value="F:nucleotide binding"/>
    <property type="evidence" value="ECO:0007669"/>
    <property type="project" value="UniProtKB-KW"/>
</dbReference>
<dbReference type="GO" id="GO:0008652">
    <property type="term" value="P:amino acid biosynthetic process"/>
    <property type="evidence" value="ECO:0007669"/>
    <property type="project" value="UniProtKB-KW"/>
</dbReference>
<dbReference type="GO" id="GO:0009073">
    <property type="term" value="P:aromatic amino acid family biosynthetic process"/>
    <property type="evidence" value="ECO:0007669"/>
    <property type="project" value="UniProtKB-KW"/>
</dbReference>
<dbReference type="GO" id="GO:0009423">
    <property type="term" value="P:chorismate biosynthetic process"/>
    <property type="evidence" value="ECO:0007669"/>
    <property type="project" value="UniProtKB-UniRule"/>
</dbReference>
<dbReference type="CDD" id="cd08195">
    <property type="entry name" value="DHQS"/>
    <property type="match status" value="1"/>
</dbReference>
<dbReference type="FunFam" id="1.20.1090.10:FF:000019">
    <property type="entry name" value="3-dehydroquinate synthase"/>
    <property type="match status" value="1"/>
</dbReference>
<dbReference type="FunFam" id="3.40.50.1970:FF:000026">
    <property type="entry name" value="3-dehydroquinate synthase"/>
    <property type="match status" value="1"/>
</dbReference>
<dbReference type="Gene3D" id="3.40.50.1970">
    <property type="match status" value="1"/>
</dbReference>
<dbReference type="Gene3D" id="1.20.1090.10">
    <property type="entry name" value="Dehydroquinate synthase-like - alpha domain"/>
    <property type="match status" value="1"/>
</dbReference>
<dbReference type="HAMAP" id="MF_00110">
    <property type="entry name" value="DHQ_synthase"/>
    <property type="match status" value="1"/>
</dbReference>
<dbReference type="InterPro" id="IPR050071">
    <property type="entry name" value="Dehydroquinate_synthase"/>
</dbReference>
<dbReference type="InterPro" id="IPR016037">
    <property type="entry name" value="DHQ_synth_AroB"/>
</dbReference>
<dbReference type="InterPro" id="IPR030963">
    <property type="entry name" value="DHQ_synth_fam"/>
</dbReference>
<dbReference type="InterPro" id="IPR030960">
    <property type="entry name" value="DHQS/DOIS_N"/>
</dbReference>
<dbReference type="InterPro" id="IPR056179">
    <property type="entry name" value="DHQS_C"/>
</dbReference>
<dbReference type="NCBIfam" id="TIGR01357">
    <property type="entry name" value="aroB"/>
    <property type="match status" value="1"/>
</dbReference>
<dbReference type="PANTHER" id="PTHR43622">
    <property type="entry name" value="3-DEHYDROQUINATE SYNTHASE"/>
    <property type="match status" value="1"/>
</dbReference>
<dbReference type="PANTHER" id="PTHR43622:SF7">
    <property type="entry name" value="3-DEHYDROQUINATE SYNTHASE, CHLOROPLASTIC"/>
    <property type="match status" value="1"/>
</dbReference>
<dbReference type="Pfam" id="PF01761">
    <property type="entry name" value="DHQ_synthase"/>
    <property type="match status" value="1"/>
</dbReference>
<dbReference type="Pfam" id="PF24621">
    <property type="entry name" value="DHQS_C"/>
    <property type="match status" value="1"/>
</dbReference>
<dbReference type="PIRSF" id="PIRSF001455">
    <property type="entry name" value="DHQ_synth"/>
    <property type="match status" value="1"/>
</dbReference>
<dbReference type="SUPFAM" id="SSF56796">
    <property type="entry name" value="Dehydroquinate synthase-like"/>
    <property type="match status" value="1"/>
</dbReference>